<keyword id="KW-1003">Cell membrane</keyword>
<keyword id="KW-0201">Cytochrome c-type biogenesis</keyword>
<keyword id="KW-0472">Membrane</keyword>
<keyword id="KW-1185">Reference proteome</keyword>
<keyword id="KW-0812">Transmembrane</keyword>
<keyword id="KW-1133">Transmembrane helix</keyword>
<name>NRFI_WOLSU</name>
<accession>Q9S1E4</accession>
<protein>
    <recommendedName>
        <fullName>Protein NrfI</fullName>
    </recommendedName>
</protein>
<organism>
    <name type="scientific">Wolinella succinogenes (strain ATCC 29543 / DSM 1740 / CCUG 13145 / JCM 31913 / LMG 7466 / NCTC 11488 / FDC 602W)</name>
    <name type="common">Vibrio succinogenes</name>
    <dbReference type="NCBI Taxonomy" id="273121"/>
    <lineage>
        <taxon>Bacteria</taxon>
        <taxon>Pseudomonadati</taxon>
        <taxon>Campylobacterota</taxon>
        <taxon>Epsilonproteobacteria</taxon>
        <taxon>Campylobacterales</taxon>
        <taxon>Helicobacteraceae</taxon>
        <taxon>Wolinella</taxon>
    </lineage>
</organism>
<evidence type="ECO:0000255" key="1"/>
<evidence type="ECO:0000305" key="2"/>
<evidence type="ECO:0000312" key="3">
    <source>
        <dbReference type="EMBL" id="CAB53161.1"/>
    </source>
</evidence>
<dbReference type="EMBL" id="AJ245540">
    <property type="protein sequence ID" value="CAB53161.1"/>
    <property type="molecule type" value="Genomic_DNA"/>
</dbReference>
<dbReference type="EMBL" id="BX571659">
    <property type="protein sequence ID" value="CAE10071.1"/>
    <property type="molecule type" value="Genomic_DNA"/>
</dbReference>
<dbReference type="RefSeq" id="WP_011138865.1">
    <property type="nucleotide sequence ID" value="NC_005090.1"/>
</dbReference>
<dbReference type="SMR" id="Q9S1E4"/>
<dbReference type="STRING" id="273121.WS0968"/>
<dbReference type="KEGG" id="wsu:WS0968"/>
<dbReference type="eggNOG" id="COG0755">
    <property type="taxonomic scope" value="Bacteria"/>
</dbReference>
<dbReference type="eggNOG" id="COG1333">
    <property type="taxonomic scope" value="Bacteria"/>
</dbReference>
<dbReference type="HOGENOM" id="CLU_008710_0_0_7"/>
<dbReference type="Proteomes" id="UP000000422">
    <property type="component" value="Chromosome"/>
</dbReference>
<dbReference type="GO" id="GO:0016020">
    <property type="term" value="C:membrane"/>
    <property type="evidence" value="ECO:0000303"/>
    <property type="project" value="UniProtKB"/>
</dbReference>
<dbReference type="GO" id="GO:0005886">
    <property type="term" value="C:plasma membrane"/>
    <property type="evidence" value="ECO:0007669"/>
    <property type="project" value="UniProtKB-SubCell"/>
</dbReference>
<dbReference type="GO" id="GO:0020037">
    <property type="term" value="F:heme binding"/>
    <property type="evidence" value="ECO:0007669"/>
    <property type="project" value="InterPro"/>
</dbReference>
<dbReference type="GO" id="GO:0017004">
    <property type="term" value="P:cytochrome complex assembly"/>
    <property type="evidence" value="ECO:0007669"/>
    <property type="project" value="UniProtKB-KW"/>
</dbReference>
<dbReference type="GO" id="GO:0051604">
    <property type="term" value="P:protein maturation"/>
    <property type="evidence" value="ECO:0000315"/>
    <property type="project" value="UniProtKB"/>
</dbReference>
<dbReference type="InterPro" id="IPR002541">
    <property type="entry name" value="Cyt_c_assembly"/>
</dbReference>
<dbReference type="InterPro" id="IPR045062">
    <property type="entry name" value="Cyt_c_biogenesis_CcsA/CcmC"/>
</dbReference>
<dbReference type="InterPro" id="IPR007816">
    <property type="entry name" value="ResB-like_domain"/>
</dbReference>
<dbReference type="PANTHER" id="PTHR30071:SF1">
    <property type="entry name" value="CYTOCHROME B_B6 PROTEIN-RELATED"/>
    <property type="match status" value="1"/>
</dbReference>
<dbReference type="PANTHER" id="PTHR30071">
    <property type="entry name" value="HEME EXPORTER PROTEIN C"/>
    <property type="match status" value="1"/>
</dbReference>
<dbReference type="Pfam" id="PF01578">
    <property type="entry name" value="Cytochrom_C_asm"/>
    <property type="match status" value="1"/>
</dbReference>
<dbReference type="Pfam" id="PF05140">
    <property type="entry name" value="ResB"/>
    <property type="match status" value="1"/>
</dbReference>
<proteinExistence type="inferred from homology"/>
<gene>
    <name type="primary">nrfI</name>
    <name type="ordered locus">WS0968</name>
</gene>
<comment type="function">
    <text>May play a role in cytochrome c biogenesis and may be required for maturation of the NrfA protein.</text>
</comment>
<comment type="subcellular location">
    <subcellularLocation>
        <location evidence="2">Cell membrane</location>
        <topology evidence="2">Multi-pass membrane protein</topology>
    </subcellularLocation>
</comment>
<comment type="similarity">
    <text evidence="2">In the C-terminal section; belongs to the CcmF/CycK/Ccl1/NrfE/CcsA family.</text>
</comment>
<reference evidence="3" key="1">
    <citation type="journal article" date="2000" name="Mol. Microbiol.">
        <title>A NapC/NirT-type cytochrome c (NrfH) is the mediator between the quinone pool and the cytochrome c nitrite reductase of Wolinella succinogenes.</title>
        <authorList>
            <person name="Simon J."/>
            <person name="Gross R."/>
            <person name="Einsle O."/>
            <person name="Kroneck P.M.H."/>
            <person name="Kroeger A."/>
            <person name="Klimmek O."/>
        </authorList>
    </citation>
    <scope>NUCLEOTIDE SEQUENCE [GENOMIC DNA]</scope>
</reference>
<reference key="2">
    <citation type="journal article" date="2003" name="Proc. Natl. Acad. Sci. U.S.A.">
        <title>Complete genome sequence and analysis of Wolinella succinogenes.</title>
        <authorList>
            <person name="Baar C."/>
            <person name="Eppinger M."/>
            <person name="Raddatz G."/>
            <person name="Simon J."/>
            <person name="Lanz C."/>
            <person name="Klimmek O."/>
            <person name="Nandakumar R."/>
            <person name="Gross R."/>
            <person name="Rosinus A."/>
            <person name="Keller H."/>
            <person name="Jagtap P."/>
            <person name="Linke B."/>
            <person name="Meyer F."/>
            <person name="Lederer H."/>
            <person name="Schuster S.C."/>
        </authorList>
    </citation>
    <scope>NUCLEOTIDE SEQUENCE [LARGE SCALE GENOMIC DNA]</scope>
    <source>
        <strain>ATCC 29543 / DSM 1740 / CCUG 13145 / JCM 31913 / LMG 7466 / NCTC 11488 / FDC 602W</strain>
    </source>
</reference>
<sequence length="902" mass="102017">MLYKLLSSYITLTLLFLLLAVGAAIATFIENDFGTASARALVYDHLWYEALLGVLALNLLAVIHRTKLYRFKARFLFHIAFVVILLGAGLTRYLGNEGIMHIREGESASSFLTTKPYLQVTLHEGTSPRTHFFPLEITAWKNRLQKSLPTQSTPLKIALVDSFIHKEGLGVSGYFDLELLHKEKRIKKRFTHNLASSLQKETLWLDDLQVDLAYGPQEIPLPFSLSLKAFELKRYPGSRSPSEYTSHVALVDPSQKVALEETIFMNNTLSYGGYKFFQTSYDMDEKGTILTLNQDPGKEVTYLGYALLFLGLLWNLLDPTSRFRVLLGRIKKDSLSLLLPLCLLSPLASSLYAQSDYLQGYLKEHQKGSQELSKGFGELIVQAKMGRMEPLNTLNREILYKLSGKSSFLGMSADQVVLGMLSNPRAWQGVPLIRVKTKPLQELIGIHPQNRARFNDFFDENSAYKLQKEVERASTLPPSRRGSYENDLLKVDERLNIALMVFQGSLFKLFPLPSDPHHRWLNLKESIFMLEGEEAKTLHQATALLLDSAFERQYFKGIEALQTISFYQYKKGNEVIPSESKLQAELLFNRLEIFPHLTPAYLVLGFLVLLSAFGLLFFPPLASHRVRVSFHLLGWILFALHTLGLLLRAYVSGHAPLSDTYESMLYISWSGMLGALLFFRHSLFALSASILMAGIFLFGAHLSHIDPEITNLVPVLKSFWLTLHVSVITASYGFFGVGAFLGSFALALFILKDHLKTPLDKPIHQLSQINEVSLILGLTLLVIGNFLGGIWANESWGRYWAWDPKETWSYISILLYALILHLRLLRPKHYDYLFSLLSLWGFGSILMTYFGVNFYLAGLHSYAQGDPLPIPLWVYALSLALALLSLIAYPHRHLQNSDKGNS</sequence>
<feature type="chain" id="PRO_0000201591" description="Protein NrfI">
    <location>
        <begin position="1"/>
        <end position="902"/>
    </location>
</feature>
<feature type="transmembrane region" description="Helical" evidence="1">
    <location>
        <begin position="9"/>
        <end position="29"/>
    </location>
</feature>
<feature type="transmembrane region" description="Helical" evidence="1">
    <location>
        <begin position="75"/>
        <end position="95"/>
    </location>
</feature>
<feature type="transmembrane region" description="Helical" evidence="1">
    <location>
        <begin position="300"/>
        <end position="320"/>
    </location>
</feature>
<feature type="transmembrane region" description="Helical" evidence="1">
    <location>
        <begin position="335"/>
        <end position="355"/>
    </location>
</feature>
<feature type="transmembrane region" description="Helical" evidence="1">
    <location>
        <begin position="602"/>
        <end position="622"/>
    </location>
</feature>
<feature type="transmembrane region" description="Helical" evidence="1">
    <location>
        <begin position="659"/>
        <end position="679"/>
    </location>
</feature>
<feature type="transmembrane region" description="Helical" evidence="1">
    <location>
        <begin position="731"/>
        <end position="751"/>
    </location>
</feature>
<feature type="transmembrane region" description="Helical" evidence="1">
    <location>
        <begin position="772"/>
        <end position="792"/>
    </location>
</feature>
<feature type="transmembrane region" description="Helical" evidence="1">
    <location>
        <begin position="832"/>
        <end position="852"/>
    </location>
</feature>
<feature type="transmembrane region" description="Helical" evidence="1">
    <location>
        <begin position="868"/>
        <end position="888"/>
    </location>
</feature>